<proteinExistence type="evidence at protein level"/>
<feature type="peptide" id="PRO_0000421476" description="Extended FMRFamide-1" evidence="3">
    <location>
        <begin position="1"/>
        <end position="7"/>
    </location>
</feature>
<feature type="modified residue" description="Leucine amide" evidence="3">
    <location>
        <position position="7"/>
    </location>
</feature>
<feature type="unsure residue" description="L or I" evidence="3">
    <location>
        <position position="5"/>
    </location>
</feature>
<feature type="unsure residue" description="L or I" evidence="3">
    <location>
        <position position="7"/>
    </location>
</feature>
<sequence>AQSFLRL</sequence>
<reference evidence="5" key="1">
    <citation type="journal article" date="2012" name="Syst. Biol.">
        <title>Peptidomics-based phylogeny and biogeography of Mantophasmatodea (Hexapoda).</title>
        <authorList>
            <person name="Predel R."/>
            <person name="Neupert S."/>
            <person name="Huetteroth W."/>
            <person name="Kahnt J."/>
            <person name="Waidelich D."/>
            <person name="Roth S."/>
        </authorList>
    </citation>
    <scope>PROTEIN SEQUENCE</scope>
    <scope>AMIDATION AT LEU-7</scope>
    <source>
        <tissue evidence="3">Thoracic perisympathetic organs</tissue>
    </source>
</reference>
<name>FAR1_AUSRA</name>
<accession>B3A0A0</accession>
<protein>
    <recommendedName>
        <fullName evidence="4">Extended FMRFamide-1</fullName>
        <shortName evidence="4">FMRFa-1</shortName>
    </recommendedName>
</protein>
<dbReference type="GO" id="GO:0005576">
    <property type="term" value="C:extracellular region"/>
    <property type="evidence" value="ECO:0007669"/>
    <property type="project" value="UniProtKB-SubCell"/>
</dbReference>
<dbReference type="GO" id="GO:0007218">
    <property type="term" value="P:neuropeptide signaling pathway"/>
    <property type="evidence" value="ECO:0007669"/>
    <property type="project" value="UniProtKB-KW"/>
</dbReference>
<keyword id="KW-0027">Amidation</keyword>
<keyword id="KW-0903">Direct protein sequencing</keyword>
<keyword id="KW-0527">Neuropeptide</keyword>
<keyword id="KW-0964">Secreted</keyword>
<evidence type="ECO:0000250" key="1">
    <source>
        <dbReference type="UniProtKB" id="P34405"/>
    </source>
</evidence>
<evidence type="ECO:0000255" key="2"/>
<evidence type="ECO:0000269" key="3">
    <source>
    </source>
</evidence>
<evidence type="ECO:0000303" key="4">
    <source>
    </source>
</evidence>
<evidence type="ECO:0000305" key="5"/>
<evidence type="ECO:0000305" key="6">
    <source>
    </source>
</evidence>
<organism>
    <name type="scientific">Austrophasma rawsonvillense</name>
    <name type="common">Gladiator</name>
    <name type="synonym">Heel-walker</name>
    <dbReference type="NCBI Taxonomy" id="253137"/>
    <lineage>
        <taxon>Eukaryota</taxon>
        <taxon>Metazoa</taxon>
        <taxon>Ecdysozoa</taxon>
        <taxon>Arthropoda</taxon>
        <taxon>Hexapoda</taxon>
        <taxon>Insecta</taxon>
        <taxon>Pterygota</taxon>
        <taxon>Neoptera</taxon>
        <taxon>Polyneoptera</taxon>
        <taxon>Mantophasmatodea</taxon>
        <taxon>Austrophasmatidae</taxon>
        <taxon>Austrophasma</taxon>
    </lineage>
</organism>
<comment type="function">
    <text evidence="1">FMRFamides and FMRFamide-like peptides are neuropeptides.</text>
</comment>
<comment type="subcellular location">
    <subcellularLocation>
        <location evidence="6">Secreted</location>
    </subcellularLocation>
</comment>
<comment type="similarity">
    <text evidence="2">Belongs to the FARP (FMRF amide related peptide) family.</text>
</comment>